<reference key="1">
    <citation type="journal article" date="2006" name="Proc. Natl. Acad. Sci. U.S.A.">
        <title>Comparative genomics of the lactic acid bacteria.</title>
        <authorList>
            <person name="Makarova K.S."/>
            <person name="Slesarev A."/>
            <person name="Wolf Y.I."/>
            <person name="Sorokin A."/>
            <person name="Mirkin B."/>
            <person name="Koonin E.V."/>
            <person name="Pavlov A."/>
            <person name="Pavlova N."/>
            <person name="Karamychev V."/>
            <person name="Polouchine N."/>
            <person name="Shakhova V."/>
            <person name="Grigoriev I."/>
            <person name="Lou Y."/>
            <person name="Rohksar D."/>
            <person name="Lucas S."/>
            <person name="Huang K."/>
            <person name="Goodstein D.M."/>
            <person name="Hawkins T."/>
            <person name="Plengvidhya V."/>
            <person name="Welker D."/>
            <person name="Hughes J."/>
            <person name="Goh Y."/>
            <person name="Benson A."/>
            <person name="Baldwin K."/>
            <person name="Lee J.-H."/>
            <person name="Diaz-Muniz I."/>
            <person name="Dosti B."/>
            <person name="Smeianov V."/>
            <person name="Wechter W."/>
            <person name="Barabote R."/>
            <person name="Lorca G."/>
            <person name="Altermann E."/>
            <person name="Barrangou R."/>
            <person name="Ganesan B."/>
            <person name="Xie Y."/>
            <person name="Rawsthorne H."/>
            <person name="Tamir D."/>
            <person name="Parker C."/>
            <person name="Breidt F."/>
            <person name="Broadbent J.R."/>
            <person name="Hutkins R."/>
            <person name="O'Sullivan D."/>
            <person name="Steele J."/>
            <person name="Unlu G."/>
            <person name="Saier M.H. Jr."/>
            <person name="Klaenhammer T."/>
            <person name="Richardson P."/>
            <person name="Kozyavkin S."/>
            <person name="Weimer B.C."/>
            <person name="Mills D.A."/>
        </authorList>
    </citation>
    <scope>NUCLEOTIDE SEQUENCE [LARGE SCALE GENOMIC DNA]</scope>
    <source>
        <strain>ATCC 25745 / CCUG 21536 / LMG 10740 / 183-1w</strain>
    </source>
</reference>
<organism>
    <name type="scientific">Pediococcus pentosaceus (strain ATCC 25745 / CCUG 21536 / LMG 10740 / 183-1w)</name>
    <dbReference type="NCBI Taxonomy" id="278197"/>
    <lineage>
        <taxon>Bacteria</taxon>
        <taxon>Bacillati</taxon>
        <taxon>Bacillota</taxon>
        <taxon>Bacilli</taxon>
        <taxon>Lactobacillales</taxon>
        <taxon>Lactobacillaceae</taxon>
        <taxon>Pediococcus</taxon>
    </lineage>
</organism>
<protein>
    <recommendedName>
        <fullName evidence="1">Probable DNA-directed RNA polymerase subunit delta</fullName>
    </recommendedName>
    <alternativeName>
        <fullName evidence="1">RNAP delta factor</fullName>
    </alternativeName>
</protein>
<comment type="function">
    <text evidence="1">Participates in both the initiation and recycling phases of transcription. In the presence of the delta subunit, RNAP displays an increased specificity of transcription, a decreased affinity for nucleic acids, and an increased efficiency of RNA synthesis because of enhanced recycling.</text>
</comment>
<comment type="subunit">
    <text evidence="1">RNAP is composed of a core of 2 alpha, a beta and a beta' subunits. The core is associated with a delta subunit and one of several sigma factors.</text>
</comment>
<comment type="similarity">
    <text evidence="1">Belongs to the RpoE family.</text>
</comment>
<feature type="chain" id="PRO_0000303136" description="Probable DNA-directed RNA polymerase subunit delta">
    <location>
        <begin position="1"/>
        <end position="178"/>
    </location>
</feature>
<feature type="domain" description="HTH HARE-type" evidence="2">
    <location>
        <begin position="14"/>
        <end position="81"/>
    </location>
</feature>
<feature type="region of interest" description="Disordered" evidence="3">
    <location>
        <begin position="120"/>
        <end position="178"/>
    </location>
</feature>
<feature type="compositionally biased region" description="Acidic residues" evidence="3">
    <location>
        <begin position="120"/>
        <end position="143"/>
    </location>
</feature>
<dbReference type="EMBL" id="CP000422">
    <property type="protein sequence ID" value="ABJ68593.1"/>
    <property type="molecule type" value="Genomic_DNA"/>
</dbReference>
<dbReference type="RefSeq" id="WP_002833001.1">
    <property type="nucleotide sequence ID" value="NC_008525.1"/>
</dbReference>
<dbReference type="SMR" id="Q03DX9"/>
<dbReference type="STRING" id="278197.PEPE_1572"/>
<dbReference type="GeneID" id="33062205"/>
<dbReference type="KEGG" id="ppe:PEPE_1572"/>
<dbReference type="eggNOG" id="COG3343">
    <property type="taxonomic scope" value="Bacteria"/>
</dbReference>
<dbReference type="HOGENOM" id="CLU_116648_0_0_9"/>
<dbReference type="OrthoDB" id="401223at2"/>
<dbReference type="Proteomes" id="UP000000773">
    <property type="component" value="Chromosome"/>
</dbReference>
<dbReference type="GO" id="GO:0000428">
    <property type="term" value="C:DNA-directed RNA polymerase complex"/>
    <property type="evidence" value="ECO:0007669"/>
    <property type="project" value="UniProtKB-KW"/>
</dbReference>
<dbReference type="GO" id="GO:0003899">
    <property type="term" value="F:DNA-directed RNA polymerase activity"/>
    <property type="evidence" value="ECO:0007669"/>
    <property type="project" value="UniProtKB-UniRule"/>
</dbReference>
<dbReference type="GO" id="GO:0006351">
    <property type="term" value="P:DNA-templated transcription"/>
    <property type="evidence" value="ECO:0007669"/>
    <property type="project" value="InterPro"/>
</dbReference>
<dbReference type="GO" id="GO:0006355">
    <property type="term" value="P:regulation of DNA-templated transcription"/>
    <property type="evidence" value="ECO:0007669"/>
    <property type="project" value="UniProtKB-UniRule"/>
</dbReference>
<dbReference type="Gene3D" id="1.10.10.1250">
    <property type="entry name" value="RNA polymerase, subunit delta, N-terminal domain"/>
    <property type="match status" value="1"/>
</dbReference>
<dbReference type="HAMAP" id="MF_00357">
    <property type="entry name" value="RNApol_bact_RpoE"/>
    <property type="match status" value="1"/>
</dbReference>
<dbReference type="InterPro" id="IPR007759">
    <property type="entry name" value="Asxl_HARE-HTH"/>
</dbReference>
<dbReference type="InterPro" id="IPR038087">
    <property type="entry name" value="RNAP_delta_N_dom_sf"/>
</dbReference>
<dbReference type="InterPro" id="IPR029757">
    <property type="entry name" value="RpoE"/>
</dbReference>
<dbReference type="NCBIfam" id="TIGR04567">
    <property type="entry name" value="RNAP_delt_lowGC"/>
    <property type="match status" value="1"/>
</dbReference>
<dbReference type="Pfam" id="PF05066">
    <property type="entry name" value="HARE-HTH"/>
    <property type="match status" value="1"/>
</dbReference>
<dbReference type="PROSITE" id="PS51913">
    <property type="entry name" value="HTH_HARE"/>
    <property type="match status" value="1"/>
</dbReference>
<evidence type="ECO:0000255" key="1">
    <source>
        <dbReference type="HAMAP-Rule" id="MF_00357"/>
    </source>
</evidence>
<evidence type="ECO:0000255" key="2">
    <source>
        <dbReference type="PROSITE-ProRule" id="PRU01261"/>
    </source>
</evidence>
<evidence type="ECO:0000256" key="3">
    <source>
        <dbReference type="SAM" id="MobiDB-lite"/>
    </source>
</evidence>
<keyword id="KW-0240">DNA-directed RNA polymerase</keyword>
<keyword id="KW-0548">Nucleotidyltransferase</keyword>
<keyword id="KW-0804">Transcription</keyword>
<keyword id="KW-0808">Transferase</keyword>
<accession>Q03DX9</accession>
<sequence length="178" mass="20136">MELENFKGQNKNELSMIEVAHAILAKSGEPMAFVDLANAVQSYLDKTDEEFRNRLSQFYTDLNVDGSFISLGENTWGLRTWYPFESIDEALIHAEDEDEDRPVRKKRKKVNAFLADAADDDDVIDYDSDDPEDEEVEAEDTTSDDAPAFEDLSNDDDTDVLPDGIEGQLSELNEDDEN</sequence>
<proteinExistence type="inferred from homology"/>
<gene>
    <name evidence="1" type="primary">rpoE</name>
    <name type="ordered locus">PEPE_1572</name>
</gene>
<name>RPOE_PEDPA</name>